<proteinExistence type="inferred from homology"/>
<dbReference type="EMBL" id="CP000115">
    <property type="protein sequence ID" value="ABA03579.1"/>
    <property type="molecule type" value="Genomic_DNA"/>
</dbReference>
<dbReference type="RefSeq" id="WP_011313644.1">
    <property type="nucleotide sequence ID" value="NC_007406.1"/>
</dbReference>
<dbReference type="SMR" id="Q3SVW2"/>
<dbReference type="STRING" id="323098.Nwi_0312"/>
<dbReference type="KEGG" id="nwi:Nwi_0312"/>
<dbReference type="eggNOG" id="COG0361">
    <property type="taxonomic scope" value="Bacteria"/>
</dbReference>
<dbReference type="HOGENOM" id="CLU_151267_4_1_5"/>
<dbReference type="OrthoDB" id="9803250at2"/>
<dbReference type="Proteomes" id="UP000002531">
    <property type="component" value="Chromosome"/>
</dbReference>
<dbReference type="GO" id="GO:0005829">
    <property type="term" value="C:cytosol"/>
    <property type="evidence" value="ECO:0007669"/>
    <property type="project" value="TreeGrafter"/>
</dbReference>
<dbReference type="GO" id="GO:0043022">
    <property type="term" value="F:ribosome binding"/>
    <property type="evidence" value="ECO:0007669"/>
    <property type="project" value="UniProtKB-UniRule"/>
</dbReference>
<dbReference type="GO" id="GO:0019843">
    <property type="term" value="F:rRNA binding"/>
    <property type="evidence" value="ECO:0007669"/>
    <property type="project" value="UniProtKB-UniRule"/>
</dbReference>
<dbReference type="GO" id="GO:0003743">
    <property type="term" value="F:translation initiation factor activity"/>
    <property type="evidence" value="ECO:0007669"/>
    <property type="project" value="UniProtKB-UniRule"/>
</dbReference>
<dbReference type="CDD" id="cd04451">
    <property type="entry name" value="S1_IF1"/>
    <property type="match status" value="1"/>
</dbReference>
<dbReference type="FunFam" id="2.40.50.140:FF:000002">
    <property type="entry name" value="Translation initiation factor IF-1"/>
    <property type="match status" value="1"/>
</dbReference>
<dbReference type="Gene3D" id="2.40.50.140">
    <property type="entry name" value="Nucleic acid-binding proteins"/>
    <property type="match status" value="1"/>
</dbReference>
<dbReference type="HAMAP" id="MF_00075">
    <property type="entry name" value="IF_1"/>
    <property type="match status" value="1"/>
</dbReference>
<dbReference type="InterPro" id="IPR012340">
    <property type="entry name" value="NA-bd_OB-fold"/>
</dbReference>
<dbReference type="InterPro" id="IPR006196">
    <property type="entry name" value="RNA-binding_domain_S1_IF1"/>
</dbReference>
<dbReference type="InterPro" id="IPR004368">
    <property type="entry name" value="TIF_IF1"/>
</dbReference>
<dbReference type="NCBIfam" id="TIGR00008">
    <property type="entry name" value="infA"/>
    <property type="match status" value="1"/>
</dbReference>
<dbReference type="PANTHER" id="PTHR33370">
    <property type="entry name" value="TRANSLATION INITIATION FACTOR IF-1, CHLOROPLASTIC"/>
    <property type="match status" value="1"/>
</dbReference>
<dbReference type="PANTHER" id="PTHR33370:SF1">
    <property type="entry name" value="TRANSLATION INITIATION FACTOR IF-1, CHLOROPLASTIC"/>
    <property type="match status" value="1"/>
</dbReference>
<dbReference type="Pfam" id="PF01176">
    <property type="entry name" value="eIF-1a"/>
    <property type="match status" value="1"/>
</dbReference>
<dbReference type="SUPFAM" id="SSF50249">
    <property type="entry name" value="Nucleic acid-binding proteins"/>
    <property type="match status" value="1"/>
</dbReference>
<dbReference type="PROSITE" id="PS50832">
    <property type="entry name" value="S1_IF1_TYPE"/>
    <property type="match status" value="1"/>
</dbReference>
<protein>
    <recommendedName>
        <fullName evidence="1">Translation initiation factor IF-1</fullName>
    </recommendedName>
</protein>
<comment type="function">
    <text evidence="1">One of the essential components for the initiation of protein synthesis. Stabilizes the binding of IF-2 and IF-3 on the 30S subunit to which N-formylmethionyl-tRNA(fMet) subsequently binds. Helps modulate mRNA selection, yielding the 30S pre-initiation complex (PIC). Upon addition of the 50S ribosomal subunit IF-1, IF-2 and IF-3 are released leaving the mature 70S translation initiation complex.</text>
</comment>
<comment type="subunit">
    <text evidence="1">Component of the 30S ribosomal translation pre-initiation complex which assembles on the 30S ribosome in the order IF-2 and IF-3, IF-1 and N-formylmethionyl-tRNA(fMet); mRNA recruitment can occur at any time during PIC assembly.</text>
</comment>
<comment type="subcellular location">
    <subcellularLocation>
        <location evidence="1">Cytoplasm</location>
    </subcellularLocation>
</comment>
<comment type="similarity">
    <text evidence="1">Belongs to the IF-1 family.</text>
</comment>
<reference key="1">
    <citation type="journal article" date="2006" name="Appl. Environ. Microbiol.">
        <title>Genome sequence of the chemolithoautotrophic nitrite-oxidizing bacterium Nitrobacter winogradskyi Nb-255.</title>
        <authorList>
            <person name="Starkenburg S.R."/>
            <person name="Chain P.S.G."/>
            <person name="Sayavedra-Soto L.A."/>
            <person name="Hauser L."/>
            <person name="Land M.L."/>
            <person name="Larimer F.W."/>
            <person name="Malfatti S.A."/>
            <person name="Klotz M.G."/>
            <person name="Bottomley P.J."/>
            <person name="Arp D.J."/>
            <person name="Hickey W.J."/>
        </authorList>
    </citation>
    <scope>NUCLEOTIDE SEQUENCE [LARGE SCALE GENOMIC DNA]</scope>
    <source>
        <strain>ATCC 25391 / DSM 10237 / CIP 104748 / NCIMB 11846 / Nb-255</strain>
    </source>
</reference>
<organism>
    <name type="scientific">Nitrobacter winogradskyi (strain ATCC 25391 / DSM 10237 / CIP 104748 / NCIMB 11846 / Nb-255)</name>
    <dbReference type="NCBI Taxonomy" id="323098"/>
    <lineage>
        <taxon>Bacteria</taxon>
        <taxon>Pseudomonadati</taxon>
        <taxon>Pseudomonadota</taxon>
        <taxon>Alphaproteobacteria</taxon>
        <taxon>Hyphomicrobiales</taxon>
        <taxon>Nitrobacteraceae</taxon>
        <taxon>Nitrobacter</taxon>
    </lineage>
</organism>
<evidence type="ECO:0000255" key="1">
    <source>
        <dbReference type="HAMAP-Rule" id="MF_00075"/>
    </source>
</evidence>
<evidence type="ECO:0000256" key="2">
    <source>
        <dbReference type="SAM" id="MobiDB-lite"/>
    </source>
</evidence>
<gene>
    <name evidence="1" type="primary">infA</name>
    <name type="ordered locus">Nwi_0312</name>
</gene>
<accession>Q3SVW2</accession>
<name>IF1_NITWN</name>
<sequence>MAKEELIQFEGLVTEILPDARYRVQLDAGHEIVAYTAGKMKKNRIKTLAGDRVTIEMSPYDLEKGRLIFRHKDERPGGPPRSGPPRGGQFRRR</sequence>
<keyword id="KW-0963">Cytoplasm</keyword>
<keyword id="KW-0396">Initiation factor</keyword>
<keyword id="KW-0648">Protein biosynthesis</keyword>
<keyword id="KW-1185">Reference proteome</keyword>
<keyword id="KW-0694">RNA-binding</keyword>
<keyword id="KW-0699">rRNA-binding</keyword>
<feature type="chain" id="PRO_0000263828" description="Translation initiation factor IF-1">
    <location>
        <begin position="1"/>
        <end position="93"/>
    </location>
</feature>
<feature type="domain" description="S1-like" evidence="1">
    <location>
        <begin position="1"/>
        <end position="72"/>
    </location>
</feature>
<feature type="region of interest" description="Disordered" evidence="2">
    <location>
        <begin position="70"/>
        <end position="93"/>
    </location>
</feature>